<organism>
    <name type="scientific">Craterostigma plantagineum</name>
    <name type="common">Blue gem</name>
    <name type="synonym">Torenia plantagineum</name>
    <dbReference type="NCBI Taxonomy" id="4153"/>
    <lineage>
        <taxon>Eukaryota</taxon>
        <taxon>Viridiplantae</taxon>
        <taxon>Streptophyta</taxon>
        <taxon>Embryophyta</taxon>
        <taxon>Tracheophyta</taxon>
        <taxon>Spermatophyta</taxon>
        <taxon>Magnoliopsida</taxon>
        <taxon>eudicotyledons</taxon>
        <taxon>Gunneridae</taxon>
        <taxon>Pentapetalae</taxon>
        <taxon>asterids</taxon>
        <taxon>lamiids</taxon>
        <taxon>Lamiales</taxon>
        <taxon>Linderniaceae</taxon>
        <taxon>Craterostigma</taxon>
    </lineage>
</organism>
<dbReference type="EC" id="1.2.1.12"/>
<dbReference type="EMBL" id="X78307">
    <property type="protein sequence ID" value="CAA55116.1"/>
    <property type="molecule type" value="mRNA"/>
</dbReference>
<dbReference type="PIR" id="S42479">
    <property type="entry name" value="S42479"/>
</dbReference>
<dbReference type="SMR" id="Q42671"/>
<dbReference type="UniPathway" id="UPA00109">
    <property type="reaction ID" value="UER00184"/>
</dbReference>
<dbReference type="GO" id="GO:0005829">
    <property type="term" value="C:cytosol"/>
    <property type="evidence" value="ECO:0007669"/>
    <property type="project" value="TreeGrafter"/>
</dbReference>
<dbReference type="GO" id="GO:0004365">
    <property type="term" value="F:glyceraldehyde-3-phosphate dehydrogenase (NAD+) (phosphorylating) activity"/>
    <property type="evidence" value="ECO:0007669"/>
    <property type="project" value="UniProtKB-EC"/>
</dbReference>
<dbReference type="GO" id="GO:0051287">
    <property type="term" value="F:NAD binding"/>
    <property type="evidence" value="ECO:0007669"/>
    <property type="project" value="InterPro"/>
</dbReference>
<dbReference type="GO" id="GO:0050661">
    <property type="term" value="F:NADP binding"/>
    <property type="evidence" value="ECO:0007669"/>
    <property type="project" value="InterPro"/>
</dbReference>
<dbReference type="GO" id="GO:0006006">
    <property type="term" value="P:glucose metabolic process"/>
    <property type="evidence" value="ECO:0007669"/>
    <property type="project" value="InterPro"/>
</dbReference>
<dbReference type="GO" id="GO:0006096">
    <property type="term" value="P:glycolytic process"/>
    <property type="evidence" value="ECO:0007669"/>
    <property type="project" value="UniProtKB-UniPathway"/>
</dbReference>
<dbReference type="CDD" id="cd18126">
    <property type="entry name" value="GAPDH_I_C"/>
    <property type="match status" value="1"/>
</dbReference>
<dbReference type="CDD" id="cd05214">
    <property type="entry name" value="GAPDH_I_N"/>
    <property type="match status" value="1"/>
</dbReference>
<dbReference type="FunFam" id="3.30.360.10:FF:000001">
    <property type="entry name" value="Glyceraldehyde-3-phosphate dehydrogenase"/>
    <property type="match status" value="1"/>
</dbReference>
<dbReference type="FunFam" id="3.40.50.720:FF:000020">
    <property type="entry name" value="Glyceraldehyde-3-phosphate dehydrogenase"/>
    <property type="match status" value="1"/>
</dbReference>
<dbReference type="Gene3D" id="3.30.360.10">
    <property type="entry name" value="Dihydrodipicolinate Reductase, domain 2"/>
    <property type="match status" value="1"/>
</dbReference>
<dbReference type="Gene3D" id="3.40.50.720">
    <property type="entry name" value="NAD(P)-binding Rossmann-like Domain"/>
    <property type="match status" value="1"/>
</dbReference>
<dbReference type="InterPro" id="IPR020831">
    <property type="entry name" value="GlycerAld/Erythrose_P_DH"/>
</dbReference>
<dbReference type="InterPro" id="IPR020830">
    <property type="entry name" value="GlycerAld_3-P_DH_AS"/>
</dbReference>
<dbReference type="InterPro" id="IPR020829">
    <property type="entry name" value="GlycerAld_3-P_DH_cat"/>
</dbReference>
<dbReference type="InterPro" id="IPR020828">
    <property type="entry name" value="GlycerAld_3-P_DH_NAD(P)-bd"/>
</dbReference>
<dbReference type="InterPro" id="IPR006424">
    <property type="entry name" value="Glyceraldehyde-3-P_DH_1"/>
</dbReference>
<dbReference type="InterPro" id="IPR036291">
    <property type="entry name" value="NAD(P)-bd_dom_sf"/>
</dbReference>
<dbReference type="NCBIfam" id="TIGR01534">
    <property type="entry name" value="GAPDH-I"/>
    <property type="match status" value="1"/>
</dbReference>
<dbReference type="PANTHER" id="PTHR10836">
    <property type="entry name" value="GLYCERALDEHYDE 3-PHOSPHATE DEHYDROGENASE"/>
    <property type="match status" value="1"/>
</dbReference>
<dbReference type="PANTHER" id="PTHR10836:SF132">
    <property type="entry name" value="GLYCERALDEHYDE-3-PHOSPHATE DEHYDROGENASE"/>
    <property type="match status" value="1"/>
</dbReference>
<dbReference type="Pfam" id="PF02800">
    <property type="entry name" value="Gp_dh_C"/>
    <property type="match status" value="1"/>
</dbReference>
<dbReference type="Pfam" id="PF00044">
    <property type="entry name" value="Gp_dh_N"/>
    <property type="match status" value="1"/>
</dbReference>
<dbReference type="PIRSF" id="PIRSF000149">
    <property type="entry name" value="GAP_DH"/>
    <property type="match status" value="1"/>
</dbReference>
<dbReference type="PRINTS" id="PR00078">
    <property type="entry name" value="G3PDHDRGNASE"/>
</dbReference>
<dbReference type="SMART" id="SM00846">
    <property type="entry name" value="Gp_dh_N"/>
    <property type="match status" value="1"/>
</dbReference>
<dbReference type="SUPFAM" id="SSF55347">
    <property type="entry name" value="Glyceraldehyde-3-phosphate dehydrogenase-like, C-terminal domain"/>
    <property type="match status" value="1"/>
</dbReference>
<dbReference type="SUPFAM" id="SSF51735">
    <property type="entry name" value="NAD(P)-binding Rossmann-fold domains"/>
    <property type="match status" value="1"/>
</dbReference>
<dbReference type="PROSITE" id="PS00071">
    <property type="entry name" value="GAPDH"/>
    <property type="match status" value="1"/>
</dbReference>
<proteinExistence type="evidence at transcript level"/>
<name>G3PC_CRAPL</name>
<sequence>MAKVKIGINGFGRIGRLVARVALVRDDVELVAVNDPFITVDYMAYMFKYDTVHGQYKHHELKVKDEKTLLFGDKPVAVFGLRNPEEIPWAETGAEYVVESTGVFTEKEKAAAHLKGGAKKVIISAPSKDAPMFVVGVNEKTYTPDIDVVSNASCTTNCLAPLAKVIHDRFGIVEGLMTTVHSITATQKTVDGPSSKDWRGGRAASFNIIPSSTGAAKAVGKVLPDLNGKLTGMAFRVPTVDVSVVDLTVTLAKEASYDEIKAAIKEESEGKLKGILGYTEEDVVSSDFVGDSRSSIFDAKAGIALSKKFVKIVAWYDNEWGYSSRVVDLIRHMAAAK</sequence>
<accession>Q42671</accession>
<keyword id="KW-0963">Cytoplasm</keyword>
<keyword id="KW-0324">Glycolysis</keyword>
<keyword id="KW-0520">NAD</keyword>
<keyword id="KW-0560">Oxidoreductase</keyword>
<protein>
    <recommendedName>
        <fullName>Glyceraldehyde-3-phosphate dehydrogenase, cytosolic</fullName>
        <ecNumber>1.2.1.12</ecNumber>
    </recommendedName>
</protein>
<feature type="chain" id="PRO_0000145598" description="Glyceraldehyde-3-phosphate dehydrogenase, cytosolic">
    <location>
        <begin position="1"/>
        <end position="337"/>
    </location>
</feature>
<feature type="active site" description="Nucleophile" evidence="2">
    <location>
        <position position="154"/>
    </location>
</feature>
<feature type="binding site" evidence="1">
    <location>
        <begin position="13"/>
        <end position="14"/>
    </location>
    <ligand>
        <name>NAD(+)</name>
        <dbReference type="ChEBI" id="CHEBI:57540"/>
    </ligand>
</feature>
<feature type="binding site" evidence="1">
    <location>
        <position position="35"/>
    </location>
    <ligand>
        <name>NAD(+)</name>
        <dbReference type="ChEBI" id="CHEBI:57540"/>
    </ligand>
</feature>
<feature type="binding site" evidence="1">
    <location>
        <position position="82"/>
    </location>
    <ligand>
        <name>NAD(+)</name>
        <dbReference type="ChEBI" id="CHEBI:57540"/>
    </ligand>
</feature>
<feature type="binding site" evidence="1">
    <location>
        <begin position="153"/>
        <end position="155"/>
    </location>
    <ligand>
        <name>D-glyceraldehyde 3-phosphate</name>
        <dbReference type="ChEBI" id="CHEBI:59776"/>
    </ligand>
</feature>
<feature type="binding site" evidence="1">
    <location>
        <position position="184"/>
    </location>
    <ligand>
        <name>D-glyceraldehyde 3-phosphate</name>
        <dbReference type="ChEBI" id="CHEBI:59776"/>
    </ligand>
</feature>
<feature type="binding site" evidence="1">
    <location>
        <begin position="213"/>
        <end position="214"/>
    </location>
    <ligand>
        <name>D-glyceraldehyde 3-phosphate</name>
        <dbReference type="ChEBI" id="CHEBI:59776"/>
    </ligand>
</feature>
<feature type="binding site" evidence="1">
    <location>
        <position position="236"/>
    </location>
    <ligand>
        <name>D-glyceraldehyde 3-phosphate</name>
        <dbReference type="ChEBI" id="CHEBI:59776"/>
    </ligand>
</feature>
<feature type="binding site" evidence="1">
    <location>
        <position position="318"/>
    </location>
    <ligand>
        <name>NAD(+)</name>
        <dbReference type="ChEBI" id="CHEBI:57540"/>
    </ligand>
</feature>
<feature type="site" description="Activates thiol group during catalysis" evidence="1">
    <location>
        <position position="181"/>
    </location>
</feature>
<comment type="function">
    <text evidence="1">Key enzyme in glycolysis that catalyzes the first step of the pathway by converting D-glyceraldehyde 3-phosphate (G3P) into 3-phospho-D-glyceroyl phosphate. Essential for the maintenance of cellular ATP levels and carbohydrate metabolism (By similarity).</text>
</comment>
<comment type="catalytic activity">
    <reaction evidence="2">
        <text>D-glyceraldehyde 3-phosphate + phosphate + NAD(+) = (2R)-3-phospho-glyceroyl phosphate + NADH + H(+)</text>
        <dbReference type="Rhea" id="RHEA:10300"/>
        <dbReference type="ChEBI" id="CHEBI:15378"/>
        <dbReference type="ChEBI" id="CHEBI:43474"/>
        <dbReference type="ChEBI" id="CHEBI:57540"/>
        <dbReference type="ChEBI" id="CHEBI:57604"/>
        <dbReference type="ChEBI" id="CHEBI:57945"/>
        <dbReference type="ChEBI" id="CHEBI:59776"/>
        <dbReference type="EC" id="1.2.1.12"/>
    </reaction>
</comment>
<comment type="pathway">
    <text>Carbohydrate degradation; glycolysis; pyruvate from D-glyceraldehyde 3-phosphate: step 1/5.</text>
</comment>
<comment type="subunit">
    <text evidence="1">Homotetramer.</text>
</comment>
<comment type="subcellular location">
    <subcellularLocation>
        <location evidence="1">Cytoplasm</location>
    </subcellularLocation>
</comment>
<comment type="miscellaneous">
    <text>Plants contain two types of GAPDH: cytosolic forms which participate in glycolysis and chloroplast forms which participate in photosynthesis. All the forms are encoded by distinct genes.</text>
</comment>
<comment type="similarity">
    <text evidence="3">Belongs to the glyceraldehyde-3-phosphate dehydrogenase family.</text>
</comment>
<gene>
    <name type="primary">GAPC</name>
</gene>
<reference key="1">
    <citation type="journal article" date="1994" name="Plant Mol. Biol.">
        <title>Dehydration and ABA increase mRNA levels and enzyme activity of cytosolic GAPDH in the resurrection plant Craterostigma plantagineum.</title>
        <authorList>
            <person name="Velasco R."/>
            <person name="Salamini F."/>
            <person name="Bartels D."/>
        </authorList>
    </citation>
    <scope>NUCLEOTIDE SEQUENCE [MRNA]</scope>
    <source>
        <tissue>Leaf</tissue>
    </source>
</reference>
<evidence type="ECO:0000250" key="1"/>
<evidence type="ECO:0000255" key="2">
    <source>
        <dbReference type="PROSITE-ProRule" id="PRU10009"/>
    </source>
</evidence>
<evidence type="ECO:0000305" key="3"/>